<feature type="chain" id="PRO_1000100636" description="Sec-independent protein translocase protein TatB">
    <location>
        <begin position="1"/>
        <end position="178"/>
    </location>
</feature>
<feature type="transmembrane region" description="Helical" evidence="1">
    <location>
        <begin position="2"/>
        <end position="22"/>
    </location>
</feature>
<feature type="region of interest" description="Disordered" evidence="2">
    <location>
        <begin position="104"/>
        <end position="178"/>
    </location>
</feature>
<feature type="compositionally biased region" description="Pro residues" evidence="2">
    <location>
        <begin position="114"/>
        <end position="131"/>
    </location>
</feature>
<feature type="compositionally biased region" description="Low complexity" evidence="2">
    <location>
        <begin position="141"/>
        <end position="154"/>
    </location>
</feature>
<name>TATB_PHEZH</name>
<reference key="1">
    <citation type="journal article" date="2008" name="BMC Genomics">
        <title>Complete genome of Phenylobacterium zucineum - a novel facultative intracellular bacterium isolated from human erythroleukemia cell line K562.</title>
        <authorList>
            <person name="Luo Y."/>
            <person name="Xu X."/>
            <person name="Ding Z."/>
            <person name="Liu Z."/>
            <person name="Zhang B."/>
            <person name="Yan Z."/>
            <person name="Sun J."/>
            <person name="Hu S."/>
            <person name="Hu X."/>
        </authorList>
    </citation>
    <scope>NUCLEOTIDE SEQUENCE [LARGE SCALE GENOMIC DNA]</scope>
    <source>
        <strain>HLK1</strain>
    </source>
</reference>
<gene>
    <name evidence="1" type="primary">tatB</name>
    <name type="ordered locus">PHZ_c1962</name>
</gene>
<comment type="function">
    <text evidence="1">Part of the twin-arginine translocation (Tat) system that transports large folded proteins containing a characteristic twin-arginine motif in their signal peptide across membranes. Together with TatC, TatB is part of a receptor directly interacting with Tat signal peptides. TatB may form an oligomeric binding site that transiently accommodates folded Tat precursor proteins before their translocation.</text>
</comment>
<comment type="subunit">
    <text evidence="1">The Tat system comprises two distinct complexes: a TatABC complex, containing multiple copies of TatA, TatB and TatC subunits, and a separate TatA complex, containing only TatA subunits. Substrates initially bind to the TatABC complex, which probably triggers association of the separate TatA complex to form the active translocon.</text>
</comment>
<comment type="subcellular location">
    <subcellularLocation>
        <location evidence="1">Cell inner membrane</location>
        <topology evidence="1">Single-pass membrane protein</topology>
    </subcellularLocation>
</comment>
<comment type="similarity">
    <text evidence="1">Belongs to the TatB family.</text>
</comment>
<dbReference type="EMBL" id="CP000747">
    <property type="protein sequence ID" value="ACG78373.1"/>
    <property type="molecule type" value="Genomic_DNA"/>
</dbReference>
<dbReference type="RefSeq" id="WP_012522515.1">
    <property type="nucleotide sequence ID" value="NC_011144.1"/>
</dbReference>
<dbReference type="SMR" id="B4RDI3"/>
<dbReference type="STRING" id="450851.PHZ_c1962"/>
<dbReference type="KEGG" id="pzu:PHZ_c1962"/>
<dbReference type="eggNOG" id="COG1826">
    <property type="taxonomic scope" value="Bacteria"/>
</dbReference>
<dbReference type="HOGENOM" id="CLU_086034_1_3_5"/>
<dbReference type="OrthoDB" id="7206969at2"/>
<dbReference type="Proteomes" id="UP000001868">
    <property type="component" value="Chromosome"/>
</dbReference>
<dbReference type="GO" id="GO:0033281">
    <property type="term" value="C:TAT protein transport complex"/>
    <property type="evidence" value="ECO:0007669"/>
    <property type="project" value="UniProtKB-UniRule"/>
</dbReference>
<dbReference type="GO" id="GO:0008320">
    <property type="term" value="F:protein transmembrane transporter activity"/>
    <property type="evidence" value="ECO:0007669"/>
    <property type="project" value="UniProtKB-UniRule"/>
</dbReference>
<dbReference type="GO" id="GO:0043953">
    <property type="term" value="P:protein transport by the Tat complex"/>
    <property type="evidence" value="ECO:0007669"/>
    <property type="project" value="UniProtKB-UniRule"/>
</dbReference>
<dbReference type="Gene3D" id="1.20.5.3310">
    <property type="match status" value="1"/>
</dbReference>
<dbReference type="HAMAP" id="MF_00237">
    <property type="entry name" value="TatB"/>
    <property type="match status" value="1"/>
</dbReference>
<dbReference type="InterPro" id="IPR003369">
    <property type="entry name" value="TatA/B/E"/>
</dbReference>
<dbReference type="InterPro" id="IPR018448">
    <property type="entry name" value="TatB"/>
</dbReference>
<dbReference type="NCBIfam" id="TIGR01410">
    <property type="entry name" value="tatB"/>
    <property type="match status" value="1"/>
</dbReference>
<dbReference type="Pfam" id="PF02416">
    <property type="entry name" value="TatA_B_E"/>
    <property type="match status" value="1"/>
</dbReference>
<dbReference type="PRINTS" id="PR01506">
    <property type="entry name" value="TATBPROTEIN"/>
</dbReference>
<sequence>MLPEIGAAELLIIAAVALIVVGPKDLPLLMRRIGQFMAKVRSMASEFRASFDDMARQSELDDLRKEVEAMRRGQFADMSIADGAMTEAAGDIEKSLAGVGVQLHSPTGYENTVEPPPPEPEPQPAAEPAPKPARKPRAAKPKAAAAPKAAAKPKAAAKPKPKPKTPGLKARKTAGSAE</sequence>
<proteinExistence type="inferred from homology"/>
<keyword id="KW-0997">Cell inner membrane</keyword>
<keyword id="KW-1003">Cell membrane</keyword>
<keyword id="KW-0472">Membrane</keyword>
<keyword id="KW-0653">Protein transport</keyword>
<keyword id="KW-1185">Reference proteome</keyword>
<keyword id="KW-0811">Translocation</keyword>
<keyword id="KW-0812">Transmembrane</keyword>
<keyword id="KW-1133">Transmembrane helix</keyword>
<keyword id="KW-0813">Transport</keyword>
<protein>
    <recommendedName>
        <fullName evidence="1">Sec-independent protein translocase protein TatB</fullName>
    </recommendedName>
</protein>
<organism>
    <name type="scientific">Phenylobacterium zucineum (strain HLK1)</name>
    <dbReference type="NCBI Taxonomy" id="450851"/>
    <lineage>
        <taxon>Bacteria</taxon>
        <taxon>Pseudomonadati</taxon>
        <taxon>Pseudomonadota</taxon>
        <taxon>Alphaproteobacteria</taxon>
        <taxon>Caulobacterales</taxon>
        <taxon>Caulobacteraceae</taxon>
        <taxon>Phenylobacterium</taxon>
    </lineage>
</organism>
<accession>B4RDI3</accession>
<evidence type="ECO:0000255" key="1">
    <source>
        <dbReference type="HAMAP-Rule" id="MF_00237"/>
    </source>
</evidence>
<evidence type="ECO:0000256" key="2">
    <source>
        <dbReference type="SAM" id="MobiDB-lite"/>
    </source>
</evidence>